<organism>
    <name type="scientific">Methanococcus maripaludis (strain C6 / ATCC BAA-1332)</name>
    <dbReference type="NCBI Taxonomy" id="444158"/>
    <lineage>
        <taxon>Archaea</taxon>
        <taxon>Methanobacteriati</taxon>
        <taxon>Methanobacteriota</taxon>
        <taxon>Methanomada group</taxon>
        <taxon>Methanococci</taxon>
        <taxon>Methanococcales</taxon>
        <taxon>Methanococcaceae</taxon>
        <taxon>Methanococcus</taxon>
    </lineage>
</organism>
<name>RPIA_METM6</name>
<sequence>MARTKKANDEVPTDSDSLKLKVAKQAAKLVKDEMVVGLGSGSTANLFIQELGKRIVEEELYIYGVPTSFDSRMVASTAGIPLISLDQCGEIDIAVDGADEVCKSTLSLIKGGGGCHTMEKIVDYHAKEFIVLADEGKLVDSLGDKTPVPLEVIPFAYSTILNKLLKMNTAPVIRTGSGKMGPVITDNGNMIIDVFISIDDAEETEIMLNNIPGVLENGVFSKCDKVLIGTSKKVEILKK</sequence>
<evidence type="ECO:0000255" key="1">
    <source>
        <dbReference type="HAMAP-Rule" id="MF_00170"/>
    </source>
</evidence>
<accession>A9AAC4</accession>
<dbReference type="EC" id="5.3.1.6" evidence="1"/>
<dbReference type="EMBL" id="CP000867">
    <property type="protein sequence ID" value="ABX02297.1"/>
    <property type="molecule type" value="Genomic_DNA"/>
</dbReference>
<dbReference type="SMR" id="A9AAC4"/>
<dbReference type="STRING" id="444158.MmarC6_1484"/>
<dbReference type="KEGG" id="mmx:MmarC6_1484"/>
<dbReference type="eggNOG" id="arCOG01122">
    <property type="taxonomic scope" value="Archaea"/>
</dbReference>
<dbReference type="HOGENOM" id="CLU_056590_1_1_2"/>
<dbReference type="OrthoDB" id="19013at2157"/>
<dbReference type="PhylomeDB" id="A9AAC4"/>
<dbReference type="UniPathway" id="UPA00115">
    <property type="reaction ID" value="UER00412"/>
</dbReference>
<dbReference type="GO" id="GO:0005829">
    <property type="term" value="C:cytosol"/>
    <property type="evidence" value="ECO:0007669"/>
    <property type="project" value="TreeGrafter"/>
</dbReference>
<dbReference type="GO" id="GO:0004751">
    <property type="term" value="F:ribose-5-phosphate isomerase activity"/>
    <property type="evidence" value="ECO:0007669"/>
    <property type="project" value="UniProtKB-UniRule"/>
</dbReference>
<dbReference type="GO" id="GO:0006014">
    <property type="term" value="P:D-ribose metabolic process"/>
    <property type="evidence" value="ECO:0007669"/>
    <property type="project" value="TreeGrafter"/>
</dbReference>
<dbReference type="GO" id="GO:0009052">
    <property type="term" value="P:pentose-phosphate shunt, non-oxidative branch"/>
    <property type="evidence" value="ECO:0007669"/>
    <property type="project" value="UniProtKB-UniRule"/>
</dbReference>
<dbReference type="CDD" id="cd01398">
    <property type="entry name" value="RPI_A"/>
    <property type="match status" value="1"/>
</dbReference>
<dbReference type="FunFam" id="3.40.50.1360:FF:000001">
    <property type="entry name" value="Ribose-5-phosphate isomerase A"/>
    <property type="match status" value="1"/>
</dbReference>
<dbReference type="Gene3D" id="3.30.70.260">
    <property type="match status" value="1"/>
</dbReference>
<dbReference type="Gene3D" id="3.40.50.1360">
    <property type="match status" value="1"/>
</dbReference>
<dbReference type="HAMAP" id="MF_00170">
    <property type="entry name" value="Rib_5P_isom_A"/>
    <property type="match status" value="1"/>
</dbReference>
<dbReference type="InterPro" id="IPR037171">
    <property type="entry name" value="NagB/RpiA_transferase-like"/>
</dbReference>
<dbReference type="InterPro" id="IPR020672">
    <property type="entry name" value="Ribose5P_isomerase_typA_subgr"/>
</dbReference>
<dbReference type="InterPro" id="IPR004788">
    <property type="entry name" value="Ribose5P_isomerase_type_A"/>
</dbReference>
<dbReference type="NCBIfam" id="NF001924">
    <property type="entry name" value="PRK00702.1"/>
    <property type="match status" value="1"/>
</dbReference>
<dbReference type="NCBIfam" id="TIGR00021">
    <property type="entry name" value="rpiA"/>
    <property type="match status" value="1"/>
</dbReference>
<dbReference type="PANTHER" id="PTHR11934">
    <property type="entry name" value="RIBOSE-5-PHOSPHATE ISOMERASE"/>
    <property type="match status" value="1"/>
</dbReference>
<dbReference type="PANTHER" id="PTHR11934:SF0">
    <property type="entry name" value="RIBOSE-5-PHOSPHATE ISOMERASE"/>
    <property type="match status" value="1"/>
</dbReference>
<dbReference type="Pfam" id="PF06026">
    <property type="entry name" value="Rib_5-P_isom_A"/>
    <property type="match status" value="1"/>
</dbReference>
<dbReference type="SUPFAM" id="SSF75445">
    <property type="entry name" value="D-ribose-5-phosphate isomerase (RpiA), lid domain"/>
    <property type="match status" value="1"/>
</dbReference>
<dbReference type="SUPFAM" id="SSF100950">
    <property type="entry name" value="NagB/RpiA/CoA transferase-like"/>
    <property type="match status" value="1"/>
</dbReference>
<feature type="chain" id="PRO_1000097675" description="Ribose-5-phosphate isomerase A">
    <location>
        <begin position="1"/>
        <end position="239"/>
    </location>
</feature>
<feature type="active site" description="Proton acceptor" evidence="1">
    <location>
        <position position="119"/>
    </location>
</feature>
<feature type="binding site" evidence="1">
    <location>
        <begin position="40"/>
        <end position="43"/>
    </location>
    <ligand>
        <name>substrate</name>
    </ligand>
</feature>
<feature type="binding site" evidence="1">
    <location>
        <begin position="96"/>
        <end position="99"/>
    </location>
    <ligand>
        <name>substrate</name>
    </ligand>
</feature>
<feature type="binding site" evidence="1">
    <location>
        <begin position="110"/>
        <end position="113"/>
    </location>
    <ligand>
        <name>substrate</name>
    </ligand>
</feature>
<feature type="binding site" evidence="1">
    <location>
        <position position="137"/>
    </location>
    <ligand>
        <name>substrate</name>
    </ligand>
</feature>
<gene>
    <name evidence="1" type="primary">rpiA</name>
    <name type="ordered locus">MmarC6_1484</name>
</gene>
<protein>
    <recommendedName>
        <fullName evidence="1">Ribose-5-phosphate isomerase A</fullName>
        <ecNumber evidence="1">5.3.1.6</ecNumber>
    </recommendedName>
    <alternativeName>
        <fullName evidence="1">Phosphoriboisomerase A</fullName>
        <shortName evidence="1">PRI</shortName>
    </alternativeName>
</protein>
<reference key="1">
    <citation type="submission" date="2007-10" db="EMBL/GenBank/DDBJ databases">
        <title>Complete sequence of Methanococcus maripaludis C6.</title>
        <authorList>
            <consortium name="US DOE Joint Genome Institute"/>
            <person name="Copeland A."/>
            <person name="Lucas S."/>
            <person name="Lapidus A."/>
            <person name="Barry K."/>
            <person name="Glavina del Rio T."/>
            <person name="Dalin E."/>
            <person name="Tice H."/>
            <person name="Pitluck S."/>
            <person name="Clum A."/>
            <person name="Schmutz J."/>
            <person name="Larimer F."/>
            <person name="Land M."/>
            <person name="Hauser L."/>
            <person name="Kyrpides N."/>
            <person name="Mikhailova N."/>
            <person name="Sieprawska-Lupa M."/>
            <person name="Whitman W.B."/>
            <person name="Richardson P."/>
        </authorList>
    </citation>
    <scope>NUCLEOTIDE SEQUENCE [LARGE SCALE GENOMIC DNA]</scope>
    <source>
        <strain>C6 / ATCC BAA-1332</strain>
    </source>
</reference>
<keyword id="KW-0413">Isomerase</keyword>
<proteinExistence type="inferred from homology"/>
<comment type="function">
    <text evidence="1">Catalyzes the reversible conversion of ribose-5-phosphate to ribulose 5-phosphate.</text>
</comment>
<comment type="catalytic activity">
    <reaction evidence="1">
        <text>aldehydo-D-ribose 5-phosphate = D-ribulose 5-phosphate</text>
        <dbReference type="Rhea" id="RHEA:14657"/>
        <dbReference type="ChEBI" id="CHEBI:58121"/>
        <dbReference type="ChEBI" id="CHEBI:58273"/>
        <dbReference type="EC" id="5.3.1.6"/>
    </reaction>
</comment>
<comment type="pathway">
    <text evidence="1">Carbohydrate degradation; pentose phosphate pathway; D-ribose 5-phosphate from D-ribulose 5-phosphate (non-oxidative stage): step 1/1.</text>
</comment>
<comment type="subunit">
    <text evidence="1">Homodimer.</text>
</comment>
<comment type="similarity">
    <text evidence="1">Belongs to the ribose 5-phosphate isomerase family.</text>
</comment>